<comment type="function">
    <text evidence="1">Allows the formation of correctly charged Gln-tRNA(Gln) through the transamidation of misacylated Glu-tRNA(Gln) in organisms which lack glutaminyl-tRNA synthetase. The reaction takes place in the presence of glutamine and ATP through an activated gamma-phospho-Glu-tRNA(Gln). The GatDE system is specific for glutamate and does not act on aspartate.</text>
</comment>
<comment type="catalytic activity">
    <reaction evidence="1">
        <text>L-glutamyl-tRNA(Gln) + L-glutamine + ATP + H2O = L-glutaminyl-tRNA(Gln) + L-glutamate + ADP + phosphate + H(+)</text>
        <dbReference type="Rhea" id="RHEA:17521"/>
        <dbReference type="Rhea" id="RHEA-COMP:9681"/>
        <dbReference type="Rhea" id="RHEA-COMP:9684"/>
        <dbReference type="ChEBI" id="CHEBI:15377"/>
        <dbReference type="ChEBI" id="CHEBI:15378"/>
        <dbReference type="ChEBI" id="CHEBI:29985"/>
        <dbReference type="ChEBI" id="CHEBI:30616"/>
        <dbReference type="ChEBI" id="CHEBI:43474"/>
        <dbReference type="ChEBI" id="CHEBI:58359"/>
        <dbReference type="ChEBI" id="CHEBI:78520"/>
        <dbReference type="ChEBI" id="CHEBI:78521"/>
        <dbReference type="ChEBI" id="CHEBI:456216"/>
    </reaction>
</comment>
<comment type="subunit">
    <text evidence="1">Heterodimer of GatD and GatE.</text>
</comment>
<comment type="similarity">
    <text evidence="1">Belongs to the asparaginase 1 family. GatD subfamily.</text>
</comment>
<gene>
    <name evidence="1" type="primary">gatD</name>
    <name type="ordered locus">M164_1273</name>
</gene>
<proteinExistence type="inferred from homology"/>
<feature type="chain" id="PRO_1000212150" description="Glutamyl-tRNA(Gln) amidotransferase subunit D">
    <location>
        <begin position="1"/>
        <end position="445"/>
    </location>
</feature>
<feature type="domain" description="Asparaginase/glutaminase" evidence="2">
    <location>
        <begin position="93"/>
        <end position="425"/>
    </location>
</feature>
<feature type="active site" evidence="1">
    <location>
        <position position="103"/>
    </location>
</feature>
<feature type="active site" evidence="1">
    <location>
        <position position="179"/>
    </location>
</feature>
<feature type="active site" evidence="1">
    <location>
        <position position="180"/>
    </location>
</feature>
<feature type="active site" evidence="1">
    <location>
        <position position="258"/>
    </location>
</feature>
<organism>
    <name type="scientific">Saccharolobus islandicus (strain M.16.4 / Kamchatka #3)</name>
    <name type="common">Sulfolobus islandicus</name>
    <dbReference type="NCBI Taxonomy" id="426118"/>
    <lineage>
        <taxon>Archaea</taxon>
        <taxon>Thermoproteota</taxon>
        <taxon>Thermoprotei</taxon>
        <taxon>Sulfolobales</taxon>
        <taxon>Sulfolobaceae</taxon>
        <taxon>Saccharolobus</taxon>
    </lineage>
</organism>
<evidence type="ECO:0000255" key="1">
    <source>
        <dbReference type="HAMAP-Rule" id="MF_00586"/>
    </source>
</evidence>
<evidence type="ECO:0000255" key="2">
    <source>
        <dbReference type="PROSITE-ProRule" id="PRU01068"/>
    </source>
</evidence>
<keyword id="KW-0067">ATP-binding</keyword>
<keyword id="KW-0436">Ligase</keyword>
<keyword id="KW-0547">Nucleotide-binding</keyword>
<keyword id="KW-0648">Protein biosynthesis</keyword>
<dbReference type="EC" id="6.3.5.-" evidence="1"/>
<dbReference type="EMBL" id="CP001402">
    <property type="protein sequence ID" value="ACR41877.1"/>
    <property type="molecule type" value="Genomic_DNA"/>
</dbReference>
<dbReference type="RefSeq" id="WP_012711295.1">
    <property type="nucleotide sequence ID" value="NC_012726.1"/>
</dbReference>
<dbReference type="SMR" id="C4KH13"/>
<dbReference type="GeneID" id="84061603"/>
<dbReference type="KEGG" id="sid:M164_1273"/>
<dbReference type="HOGENOM" id="CLU_019134_2_1_2"/>
<dbReference type="Proteomes" id="UP000001479">
    <property type="component" value="Chromosome"/>
</dbReference>
<dbReference type="GO" id="GO:0004067">
    <property type="term" value="F:asparaginase activity"/>
    <property type="evidence" value="ECO:0007669"/>
    <property type="project" value="InterPro"/>
</dbReference>
<dbReference type="GO" id="GO:0005524">
    <property type="term" value="F:ATP binding"/>
    <property type="evidence" value="ECO:0007669"/>
    <property type="project" value="UniProtKB-KW"/>
</dbReference>
<dbReference type="GO" id="GO:0050567">
    <property type="term" value="F:glutaminyl-tRNA synthase (glutamine-hydrolyzing) activity"/>
    <property type="evidence" value="ECO:0007669"/>
    <property type="project" value="UniProtKB-UniRule"/>
</dbReference>
<dbReference type="GO" id="GO:0006520">
    <property type="term" value="P:amino acid metabolic process"/>
    <property type="evidence" value="ECO:0007669"/>
    <property type="project" value="InterPro"/>
</dbReference>
<dbReference type="GO" id="GO:0006450">
    <property type="term" value="P:regulation of translational fidelity"/>
    <property type="evidence" value="ECO:0007669"/>
    <property type="project" value="InterPro"/>
</dbReference>
<dbReference type="GO" id="GO:0006412">
    <property type="term" value="P:translation"/>
    <property type="evidence" value="ECO:0007669"/>
    <property type="project" value="UniProtKB-UniRule"/>
</dbReference>
<dbReference type="CDD" id="cd08962">
    <property type="entry name" value="GatD"/>
    <property type="match status" value="1"/>
</dbReference>
<dbReference type="Gene3D" id="2.30.30.520">
    <property type="match status" value="1"/>
</dbReference>
<dbReference type="Gene3D" id="3.40.50.40">
    <property type="match status" value="1"/>
</dbReference>
<dbReference type="Gene3D" id="3.40.50.1170">
    <property type="entry name" value="L-asparaginase, N-terminal domain"/>
    <property type="match status" value="1"/>
</dbReference>
<dbReference type="HAMAP" id="MF_00586">
    <property type="entry name" value="GatD"/>
    <property type="match status" value="1"/>
</dbReference>
<dbReference type="InterPro" id="IPR006033">
    <property type="entry name" value="AsnA_fam"/>
</dbReference>
<dbReference type="InterPro" id="IPR036152">
    <property type="entry name" value="Asp/glu_Ase-like_sf"/>
</dbReference>
<dbReference type="InterPro" id="IPR006034">
    <property type="entry name" value="Asparaginase/glutaminase-like"/>
</dbReference>
<dbReference type="InterPro" id="IPR027475">
    <property type="entry name" value="Asparaginase/glutaminase_AS2"/>
</dbReference>
<dbReference type="InterPro" id="IPR040919">
    <property type="entry name" value="Asparaginase_C"/>
</dbReference>
<dbReference type="InterPro" id="IPR011878">
    <property type="entry name" value="GatD"/>
</dbReference>
<dbReference type="InterPro" id="IPR040918">
    <property type="entry name" value="GatD_N"/>
</dbReference>
<dbReference type="InterPro" id="IPR037222">
    <property type="entry name" value="GatD_N_sf"/>
</dbReference>
<dbReference type="InterPro" id="IPR027473">
    <property type="entry name" value="L-asparaginase_C"/>
</dbReference>
<dbReference type="InterPro" id="IPR027474">
    <property type="entry name" value="L-asparaginase_N"/>
</dbReference>
<dbReference type="InterPro" id="IPR037152">
    <property type="entry name" value="L-asparaginase_N_sf"/>
</dbReference>
<dbReference type="NCBIfam" id="TIGR00519">
    <property type="entry name" value="asnASE_I"/>
    <property type="match status" value="1"/>
</dbReference>
<dbReference type="NCBIfam" id="TIGR02153">
    <property type="entry name" value="gatD_arch"/>
    <property type="match status" value="1"/>
</dbReference>
<dbReference type="NCBIfam" id="NF003217">
    <property type="entry name" value="PRK04183.1"/>
    <property type="match status" value="1"/>
</dbReference>
<dbReference type="PANTHER" id="PTHR11707:SF28">
    <property type="entry name" value="60 KDA LYSOPHOSPHOLIPASE"/>
    <property type="match status" value="1"/>
</dbReference>
<dbReference type="PANTHER" id="PTHR11707">
    <property type="entry name" value="L-ASPARAGINASE"/>
    <property type="match status" value="1"/>
</dbReference>
<dbReference type="Pfam" id="PF00710">
    <property type="entry name" value="Asparaginase"/>
    <property type="match status" value="1"/>
</dbReference>
<dbReference type="Pfam" id="PF17763">
    <property type="entry name" value="Asparaginase_C"/>
    <property type="match status" value="1"/>
</dbReference>
<dbReference type="Pfam" id="PF18195">
    <property type="entry name" value="GatD_N"/>
    <property type="match status" value="1"/>
</dbReference>
<dbReference type="PIRSF" id="PIRSF500175">
    <property type="entry name" value="Glu_ADT_D"/>
    <property type="match status" value="1"/>
</dbReference>
<dbReference type="PIRSF" id="PIRSF001220">
    <property type="entry name" value="L-ASNase_gatD"/>
    <property type="match status" value="1"/>
</dbReference>
<dbReference type="PRINTS" id="PR00139">
    <property type="entry name" value="ASNGLNASE"/>
</dbReference>
<dbReference type="SMART" id="SM00870">
    <property type="entry name" value="Asparaginase"/>
    <property type="match status" value="1"/>
</dbReference>
<dbReference type="SUPFAM" id="SSF141300">
    <property type="entry name" value="GatD N-terminal domain-like"/>
    <property type="match status" value="1"/>
</dbReference>
<dbReference type="SUPFAM" id="SSF53774">
    <property type="entry name" value="Glutaminase/Asparaginase"/>
    <property type="match status" value="1"/>
</dbReference>
<dbReference type="PROSITE" id="PS00917">
    <property type="entry name" value="ASN_GLN_ASE_2"/>
    <property type="match status" value="1"/>
</dbReference>
<dbReference type="PROSITE" id="PS51732">
    <property type="entry name" value="ASN_GLN_ASE_3"/>
    <property type="match status" value="1"/>
</dbReference>
<accession>C4KH13</accession>
<name>GATD_SACI6</name>
<reference key="1">
    <citation type="journal article" date="2009" name="Proc. Natl. Acad. Sci. U.S.A.">
        <title>Biogeography of the Sulfolobus islandicus pan-genome.</title>
        <authorList>
            <person name="Reno M.L."/>
            <person name="Held N.L."/>
            <person name="Fields C.J."/>
            <person name="Burke P.V."/>
            <person name="Whitaker R.J."/>
        </authorList>
    </citation>
    <scope>NUCLEOTIDE SEQUENCE [LARGE SCALE GENOMIC DNA]</scope>
    <source>
        <strain>M.16.4 / Kamchatka #3</strain>
    </source>
</reference>
<sequence>MQENYKAKAYDILKNLNIEEGDLIEIKKGDLRIRGILLPSYSKDERIFVIKLDNGYNIGISIDNISEIKLITKNSSKAQESERKEVSRNGAKSEIKIISTGGTIVSKVEYETGAVRPALTTEEIVQFLPEINEIAKVDAEVLFSILSENMKPEYWVKIAESVKKAFDEGNTGVVIAHGTDTMAYTASALAFSLRSLQGPVVLVGSQRSSDRPSSDSAINLLSAVTTAKYAPFGEVVVNMHADSSDTYALVHRGVKVRKMHSSRRDAFQSVNDKPLAKVLWKERKLVMLDKSYMSKKGETTLDAKFDNRAFLLYYYPGLDRDFLEHILTNTKIRGLIIAGTGLGHTSSDYVELFRKATKDGIFIGMTTQCLFGRVNMNVYTTGRQLLDAGVTPLEDMLPEVALVKLMWVLAHEQDLEKIRSLMISNLVGEINPRHTLDLFPRWSYE</sequence>
<protein>
    <recommendedName>
        <fullName evidence="1">Glutamyl-tRNA(Gln) amidotransferase subunit D</fullName>
        <shortName evidence="1">Glu-ADT subunit D</shortName>
        <ecNumber evidence="1">6.3.5.-</ecNumber>
    </recommendedName>
</protein>